<keyword id="KW-0025">Alternative splicing</keyword>
<keyword id="KW-0067">ATP-binding</keyword>
<keyword id="KW-0115">cAMP biosynthesis</keyword>
<keyword id="KW-1003">Cell membrane</keyword>
<keyword id="KW-0966">Cell projection</keyword>
<keyword id="KW-0963">Cytoplasm</keyword>
<keyword id="KW-0206">Cytoskeleton</keyword>
<keyword id="KW-0456">Lyase</keyword>
<keyword id="KW-0460">Magnesium</keyword>
<keyword id="KW-0472">Membrane</keyword>
<keyword id="KW-0479">Metal-binding</keyword>
<keyword id="KW-0496">Mitochondrion</keyword>
<keyword id="KW-0547">Nucleotide-binding</keyword>
<keyword id="KW-0539">Nucleus</keyword>
<keyword id="KW-1185">Reference proteome</keyword>
<keyword id="KW-0677">Repeat</keyword>
<proteinExistence type="evidence at protein level"/>
<sequence length="1614" mass="186412">MSARRQELQDRAIVKIAAHLPDLIVYGDFSPERPSVKCFDGVLMFVDISGFTAMTEKFSTAMYMDRGAEQLVEILNYYISAIVEKVLIFGGDILKFAGDALLALWKVERKQLKNIITVVIKCSLEIHGLFEAKEAEEGLDIRVKIGLAAGHITMLVFGDETRNYFLVIGQAVDDVRLAQNMAQMNDVILSPNCWQLCDRSMIEIERIPDQRAVKVSFLKPPPTFNFDEFFTKCMGFMDYYPSGDHKNFLRLACMLESDPELELSLQKYVMEIILKQIDDKQLRGYLSELRPVTIVFVNLMFKEQDKVEVIGSAIQAACVHITSVLKVFRGQINKVFMFDKGCSFLCVFGFPGEKAPDEITHALESAVDIFDFCSQVHKIRTVSIGVASGIVFCGIVGHTVRHEYTVIGQKVNIAARMMMYYPGIVSCDSVTYDGSNLPAYFFKELPKKVMKGVADPGPVYQCLGLNEKVMFGMAYLICNRYEGYPLLGRVREIDYFMSTMKDFLMTNCSRVLMYEGLPGYGKSQVLMEIEYLASQHENHRAVAIALTKISFHQNFYTIQILMANVLGLDTCKHYKERQTNLQNRVKTLLDEKFHCLLNDIFHVQFPVSREMSRMSKIRKQKQLEALFMKILAQTVREERIIFIIDEAQFVDGTSWAFIEKLIRSMPIFIVMSLAPFSEVPCAAANAIMKNRNTTYITLGTMQPQEIRDKVCVDLSVSSIPRELDSYLVEGSCGIPYYCEELLKNLDHHRVLLFQQAETEQKTNVTWNNMFKHSVRPTDDMQLFTSISEGQKEVCYLVSGVRLNNLSPPASLKEISLVQLDSMSLSHQMLVRCAAIIGLTFTTELLFEILPCWNMKMMIKALATLVESNVFNCFRSSKDLQLALKQNVPTFEVHYRSLALKLKEGLTYGEEEELREMEGEVVECRILRFCRPIMQKTAYELWLKDQKKVLHLKCARFLEESAHRCNHCRNVDFIPYHHFIVDIRLNTLDMDTVKRMVTSQGFKIDEEEAIFSKSELPRKYKFPENLSITEIREKILHFFDNVILKMKSSPNDIIPLESCQCKELLQIVILPLAQHFVALEENNKALYYFLELASAYLILGDNYNAYMYLGEGERLLKSLTNEDSWSQTFEYATFYSLKAEVCFNMGQMVLAKKMLRKALKLLNRMFPCNLLTLTFQMHVEKNRLSHFMNQHTQEGSVPGKKLAQLYLQASCFSLLWRIYSLNFFFHYKYYGHLAAMMEMNTSLETQNDFQIIKAYLDFSLYHHLAGYQGVWFKYEILVMEQLLNLPLKGEAIEIMAYTADTLGHIKFLMGHLDLAIELGSRAHRMWSLLRNPNKYQMVLCRLSKPLFLKSRYKHLVQVLGWLWDLSVTEEDIFSKAFFYFVCLDIMLYSGFIYRTFEECLEFIHHNEDNRILKFQSGLLLGLYSCIAVWYARLQEWDNFNKFSDRAKHLVTRRTPTVLYYEGISRYMEGQVLHLQKQIEEQAENAQDSGVEILKALETLVAQNTTGPVFYPRLYHLMAYVCILMGDGHSCDFFLNTALELSETHGNLLEKCWLSMSKEWWYSASELTGDQWLQTVLSLPSWDKIVSGKGGQRKRSWSWFCPPNFSMVSWSQPQCA</sequence>
<accession>Q8C0T9</accession>
<accession>B2RRJ9</accession>
<accession>Q3V0F8</accession>
<gene>
    <name type="primary">Adcy10</name>
    <name type="synonym">Sac</name>
    <name type="synonym">Sacy</name>
</gene>
<dbReference type="EC" id="4.6.1.1"/>
<dbReference type="EMBL" id="AK029849">
    <property type="protein sequence ID" value="BAC26642.1"/>
    <property type="molecule type" value="mRNA"/>
</dbReference>
<dbReference type="EMBL" id="AK133181">
    <property type="protein sequence ID" value="BAE21546.1"/>
    <property type="molecule type" value="mRNA"/>
</dbReference>
<dbReference type="EMBL" id="BC138448">
    <property type="protein sequence ID" value="AAI38449.1"/>
    <property type="molecule type" value="mRNA"/>
</dbReference>
<dbReference type="CCDS" id="CCDS35756.1">
    <molecule id="Q8C0T9-1"/>
</dbReference>
<dbReference type="RefSeq" id="NP_766617.2">
    <molecule id="Q8C0T9-1"/>
    <property type="nucleotide sequence ID" value="NM_173029.3"/>
</dbReference>
<dbReference type="RefSeq" id="XP_006496930.1">
    <molecule id="Q8C0T9-1"/>
    <property type="nucleotide sequence ID" value="XM_006496867.1"/>
</dbReference>
<dbReference type="RefSeq" id="XP_017176545.1">
    <molecule id="Q8C0T9-1"/>
    <property type="nucleotide sequence ID" value="XM_017321056.3"/>
</dbReference>
<dbReference type="SMR" id="Q8C0T9"/>
<dbReference type="BioGRID" id="234845">
    <property type="interactions" value="3"/>
</dbReference>
<dbReference type="DIP" id="DIP-60950N"/>
<dbReference type="FunCoup" id="Q8C0T9">
    <property type="interactions" value="422"/>
</dbReference>
<dbReference type="IntAct" id="Q8C0T9">
    <property type="interactions" value="1"/>
</dbReference>
<dbReference type="STRING" id="10090.ENSMUSP00000027852"/>
<dbReference type="iPTMnet" id="Q8C0T9"/>
<dbReference type="PhosphoSitePlus" id="Q8C0T9"/>
<dbReference type="jPOST" id="Q8C0T9"/>
<dbReference type="PaxDb" id="10090-ENSMUSP00000027852"/>
<dbReference type="ProteomicsDB" id="285765">
    <molecule id="Q8C0T9-1"/>
</dbReference>
<dbReference type="ProteomicsDB" id="285766">
    <molecule id="Q8C0T9-2"/>
</dbReference>
<dbReference type="Antibodypedia" id="3017">
    <property type="antibodies" value="154 antibodies from 24 providers"/>
</dbReference>
<dbReference type="DNASU" id="271639"/>
<dbReference type="Ensembl" id="ENSMUST00000027852.15">
    <molecule id="Q8C0T9-1"/>
    <property type="protein sequence ID" value="ENSMUSP00000027852.9"/>
    <property type="gene ID" value="ENSMUSG00000026567.17"/>
</dbReference>
<dbReference type="Ensembl" id="ENSMUST00000148550.8">
    <molecule id="Q8C0T9-2"/>
    <property type="protein sequence ID" value="ENSMUSP00000137959.2"/>
    <property type="gene ID" value="ENSMUSG00000026567.17"/>
</dbReference>
<dbReference type="GeneID" id="271639"/>
<dbReference type="KEGG" id="mmu:271639"/>
<dbReference type="UCSC" id="uc007djf.1">
    <molecule id="Q8C0T9-1"/>
    <property type="organism name" value="mouse"/>
</dbReference>
<dbReference type="AGR" id="MGI:2660854"/>
<dbReference type="CTD" id="55811"/>
<dbReference type="MGI" id="MGI:2660854">
    <property type="gene designation" value="Adcy10"/>
</dbReference>
<dbReference type="VEuPathDB" id="HostDB:ENSMUSG00000026567"/>
<dbReference type="eggNOG" id="ENOG502QPPT">
    <property type="taxonomic scope" value="Eukaryota"/>
</dbReference>
<dbReference type="GeneTree" id="ENSGT00390000001322"/>
<dbReference type="HOGENOM" id="CLU_047661_0_0_1"/>
<dbReference type="InParanoid" id="Q8C0T9"/>
<dbReference type="OMA" id="HIIRFCK"/>
<dbReference type="OrthoDB" id="73563at9989"/>
<dbReference type="PhylomeDB" id="Q8C0T9"/>
<dbReference type="TreeFam" id="TF329284"/>
<dbReference type="BRENDA" id="4.6.1.1">
    <property type="organism ID" value="3474"/>
</dbReference>
<dbReference type="Reactome" id="R-MMU-5610787">
    <property type="pathway name" value="Hedgehog 'off' state"/>
</dbReference>
<dbReference type="BioGRID-ORCS" id="271639">
    <property type="hits" value="0 hits in 63 CRISPR screens"/>
</dbReference>
<dbReference type="PRO" id="PR:Q8C0T9"/>
<dbReference type="Proteomes" id="UP000000589">
    <property type="component" value="Chromosome 1"/>
</dbReference>
<dbReference type="RNAct" id="Q8C0T9">
    <property type="molecule type" value="protein"/>
</dbReference>
<dbReference type="Bgee" id="ENSMUSG00000026567">
    <property type="expression patterns" value="Expressed in spermatid and 29 other cell types or tissues"/>
</dbReference>
<dbReference type="ExpressionAtlas" id="Q8C0T9">
    <property type="expression patterns" value="baseline and differential"/>
</dbReference>
<dbReference type="GO" id="GO:0016324">
    <property type="term" value="C:apical plasma membrane"/>
    <property type="evidence" value="ECO:0000314"/>
    <property type="project" value="MGI"/>
</dbReference>
<dbReference type="GO" id="GO:0005929">
    <property type="term" value="C:cilium"/>
    <property type="evidence" value="ECO:0007669"/>
    <property type="project" value="UniProtKB-SubCell"/>
</dbReference>
<dbReference type="GO" id="GO:0005737">
    <property type="term" value="C:cytoplasm"/>
    <property type="evidence" value="ECO:0000304"/>
    <property type="project" value="MGI"/>
</dbReference>
<dbReference type="GO" id="GO:0005856">
    <property type="term" value="C:cytoskeleton"/>
    <property type="evidence" value="ECO:0007669"/>
    <property type="project" value="UniProtKB-SubCell"/>
</dbReference>
<dbReference type="GO" id="GO:0005576">
    <property type="term" value="C:extracellular region"/>
    <property type="evidence" value="ECO:0007669"/>
    <property type="project" value="GOC"/>
</dbReference>
<dbReference type="GO" id="GO:0016020">
    <property type="term" value="C:membrane"/>
    <property type="evidence" value="ECO:0000314"/>
    <property type="project" value="MGI"/>
</dbReference>
<dbReference type="GO" id="GO:0005739">
    <property type="term" value="C:mitochondrion"/>
    <property type="evidence" value="ECO:0007669"/>
    <property type="project" value="UniProtKB-SubCell"/>
</dbReference>
<dbReference type="GO" id="GO:0005634">
    <property type="term" value="C:nucleus"/>
    <property type="evidence" value="ECO:0000250"/>
    <property type="project" value="UniProtKB"/>
</dbReference>
<dbReference type="GO" id="GO:0048471">
    <property type="term" value="C:perinuclear region of cytoplasm"/>
    <property type="evidence" value="ECO:0000250"/>
    <property type="project" value="UniProtKB"/>
</dbReference>
<dbReference type="GO" id="GO:0004016">
    <property type="term" value="F:adenylate cyclase activity"/>
    <property type="evidence" value="ECO:0000250"/>
    <property type="project" value="UniProtKB"/>
</dbReference>
<dbReference type="GO" id="GO:0005524">
    <property type="term" value="F:ATP binding"/>
    <property type="evidence" value="ECO:0007669"/>
    <property type="project" value="UniProtKB-KW"/>
</dbReference>
<dbReference type="GO" id="GO:0071890">
    <property type="term" value="F:bicarbonate binding"/>
    <property type="evidence" value="ECO:0000250"/>
    <property type="project" value="UniProtKB"/>
</dbReference>
<dbReference type="GO" id="GO:0000287">
    <property type="term" value="F:magnesium ion binding"/>
    <property type="evidence" value="ECO:0007669"/>
    <property type="project" value="InterPro"/>
</dbReference>
<dbReference type="GO" id="GO:0006171">
    <property type="term" value="P:cAMP biosynthetic process"/>
    <property type="evidence" value="ECO:0000250"/>
    <property type="project" value="UniProtKB"/>
</dbReference>
<dbReference type="GO" id="GO:0003351">
    <property type="term" value="P:epithelial cilium movement involved in extracellular fluid movement"/>
    <property type="evidence" value="ECO:0000250"/>
    <property type="project" value="UniProtKB"/>
</dbReference>
<dbReference type="GO" id="GO:0035556">
    <property type="term" value="P:intracellular signal transduction"/>
    <property type="evidence" value="ECO:0007669"/>
    <property type="project" value="InterPro"/>
</dbReference>
<dbReference type="GO" id="GO:0007283">
    <property type="term" value="P:spermatogenesis"/>
    <property type="evidence" value="ECO:0007669"/>
    <property type="project" value="InterPro"/>
</dbReference>
<dbReference type="CDD" id="cd07302">
    <property type="entry name" value="CHD"/>
    <property type="match status" value="2"/>
</dbReference>
<dbReference type="FunFam" id="3.30.70.1230:FF:000017">
    <property type="entry name" value="Adenylate cyclase type 10"/>
    <property type="match status" value="1"/>
</dbReference>
<dbReference type="FunFam" id="3.30.70.1230:FF:000021">
    <property type="entry name" value="Adenylate cyclase type 10"/>
    <property type="match status" value="1"/>
</dbReference>
<dbReference type="FunFam" id="3.40.50.300:FF:001623">
    <property type="entry name" value="Adenylate cyclase type 10"/>
    <property type="match status" value="1"/>
</dbReference>
<dbReference type="Gene3D" id="3.30.70.1230">
    <property type="entry name" value="Nucleotide cyclase"/>
    <property type="match status" value="2"/>
</dbReference>
<dbReference type="Gene3D" id="3.40.50.300">
    <property type="entry name" value="P-loop containing nucleotide triphosphate hydrolases"/>
    <property type="match status" value="1"/>
</dbReference>
<dbReference type="InterPro" id="IPR001054">
    <property type="entry name" value="A/G_cyclase"/>
</dbReference>
<dbReference type="InterPro" id="IPR016577">
    <property type="entry name" value="Adenylate_cyclase_typ10"/>
</dbReference>
<dbReference type="InterPro" id="IPR029787">
    <property type="entry name" value="Nucleotide_cyclase"/>
</dbReference>
<dbReference type="InterPro" id="IPR027417">
    <property type="entry name" value="P-loop_NTPase"/>
</dbReference>
<dbReference type="InterPro" id="IPR011990">
    <property type="entry name" value="TPR-like_helical_dom_sf"/>
</dbReference>
<dbReference type="PANTHER" id="PTHR16305:SF32">
    <property type="entry name" value="ADENYLATE CYCLASE TYPE 10"/>
    <property type="match status" value="1"/>
</dbReference>
<dbReference type="PANTHER" id="PTHR16305">
    <property type="entry name" value="TESTICULAR SOLUBLE ADENYLYL CYCLASE"/>
    <property type="match status" value="1"/>
</dbReference>
<dbReference type="Pfam" id="PF00211">
    <property type="entry name" value="Guanylate_cyc"/>
    <property type="match status" value="2"/>
</dbReference>
<dbReference type="PIRSF" id="PIRSF011131">
    <property type="entry name" value="Soluble_adenylyl_cyclase"/>
    <property type="match status" value="1"/>
</dbReference>
<dbReference type="SMART" id="SM00044">
    <property type="entry name" value="CYCc"/>
    <property type="match status" value="1"/>
</dbReference>
<dbReference type="SUPFAM" id="SSF55073">
    <property type="entry name" value="Nucleotide cyclase"/>
    <property type="match status" value="2"/>
</dbReference>
<dbReference type="SUPFAM" id="SSF52540">
    <property type="entry name" value="P-loop containing nucleoside triphosphate hydrolases"/>
    <property type="match status" value="1"/>
</dbReference>
<dbReference type="SUPFAM" id="SSF48452">
    <property type="entry name" value="TPR-like"/>
    <property type="match status" value="1"/>
</dbReference>
<dbReference type="PROSITE" id="PS50125">
    <property type="entry name" value="GUANYLATE_CYCLASE_2"/>
    <property type="match status" value="2"/>
</dbReference>
<protein>
    <recommendedName>
        <fullName>Adenylate cyclase type 10</fullName>
        <ecNumber>4.6.1.1</ecNumber>
    </recommendedName>
    <alternativeName>
        <fullName>Germ cell soluble adenylyl cyclase</fullName>
        <shortName>sAC</shortName>
    </alternativeName>
    <alternativeName>
        <fullName>Testicular soluble adenylyl cyclase</fullName>
    </alternativeName>
</protein>
<name>ADCYA_MOUSE</name>
<reference key="1">
    <citation type="journal article" date="2005" name="Science">
        <title>The transcriptional landscape of the mammalian genome.</title>
        <authorList>
            <person name="Carninci P."/>
            <person name="Kasukawa T."/>
            <person name="Katayama S."/>
            <person name="Gough J."/>
            <person name="Frith M.C."/>
            <person name="Maeda N."/>
            <person name="Oyama R."/>
            <person name="Ravasi T."/>
            <person name="Lenhard B."/>
            <person name="Wells C."/>
            <person name="Kodzius R."/>
            <person name="Shimokawa K."/>
            <person name="Bajic V.B."/>
            <person name="Brenner S.E."/>
            <person name="Batalov S."/>
            <person name="Forrest A.R."/>
            <person name="Zavolan M."/>
            <person name="Davis M.J."/>
            <person name="Wilming L.G."/>
            <person name="Aidinis V."/>
            <person name="Allen J.E."/>
            <person name="Ambesi-Impiombato A."/>
            <person name="Apweiler R."/>
            <person name="Aturaliya R.N."/>
            <person name="Bailey T.L."/>
            <person name="Bansal M."/>
            <person name="Baxter L."/>
            <person name="Beisel K.W."/>
            <person name="Bersano T."/>
            <person name="Bono H."/>
            <person name="Chalk A.M."/>
            <person name="Chiu K.P."/>
            <person name="Choudhary V."/>
            <person name="Christoffels A."/>
            <person name="Clutterbuck D.R."/>
            <person name="Crowe M.L."/>
            <person name="Dalla E."/>
            <person name="Dalrymple B.P."/>
            <person name="de Bono B."/>
            <person name="Della Gatta G."/>
            <person name="di Bernardo D."/>
            <person name="Down T."/>
            <person name="Engstrom P."/>
            <person name="Fagiolini M."/>
            <person name="Faulkner G."/>
            <person name="Fletcher C.F."/>
            <person name="Fukushima T."/>
            <person name="Furuno M."/>
            <person name="Futaki S."/>
            <person name="Gariboldi M."/>
            <person name="Georgii-Hemming P."/>
            <person name="Gingeras T.R."/>
            <person name="Gojobori T."/>
            <person name="Green R.E."/>
            <person name="Gustincich S."/>
            <person name="Harbers M."/>
            <person name="Hayashi Y."/>
            <person name="Hensch T.K."/>
            <person name="Hirokawa N."/>
            <person name="Hill D."/>
            <person name="Huminiecki L."/>
            <person name="Iacono M."/>
            <person name="Ikeo K."/>
            <person name="Iwama A."/>
            <person name="Ishikawa T."/>
            <person name="Jakt M."/>
            <person name="Kanapin A."/>
            <person name="Katoh M."/>
            <person name="Kawasawa Y."/>
            <person name="Kelso J."/>
            <person name="Kitamura H."/>
            <person name="Kitano H."/>
            <person name="Kollias G."/>
            <person name="Krishnan S.P."/>
            <person name="Kruger A."/>
            <person name="Kummerfeld S.K."/>
            <person name="Kurochkin I.V."/>
            <person name="Lareau L.F."/>
            <person name="Lazarevic D."/>
            <person name="Lipovich L."/>
            <person name="Liu J."/>
            <person name="Liuni S."/>
            <person name="McWilliam S."/>
            <person name="Madan Babu M."/>
            <person name="Madera M."/>
            <person name="Marchionni L."/>
            <person name="Matsuda H."/>
            <person name="Matsuzawa S."/>
            <person name="Miki H."/>
            <person name="Mignone F."/>
            <person name="Miyake S."/>
            <person name="Morris K."/>
            <person name="Mottagui-Tabar S."/>
            <person name="Mulder N."/>
            <person name="Nakano N."/>
            <person name="Nakauchi H."/>
            <person name="Ng P."/>
            <person name="Nilsson R."/>
            <person name="Nishiguchi S."/>
            <person name="Nishikawa S."/>
            <person name="Nori F."/>
            <person name="Ohara O."/>
            <person name="Okazaki Y."/>
            <person name="Orlando V."/>
            <person name="Pang K.C."/>
            <person name="Pavan W.J."/>
            <person name="Pavesi G."/>
            <person name="Pesole G."/>
            <person name="Petrovsky N."/>
            <person name="Piazza S."/>
            <person name="Reed J."/>
            <person name="Reid J.F."/>
            <person name="Ring B.Z."/>
            <person name="Ringwald M."/>
            <person name="Rost B."/>
            <person name="Ruan Y."/>
            <person name="Salzberg S.L."/>
            <person name="Sandelin A."/>
            <person name="Schneider C."/>
            <person name="Schoenbach C."/>
            <person name="Sekiguchi K."/>
            <person name="Semple C.A."/>
            <person name="Seno S."/>
            <person name="Sessa L."/>
            <person name="Sheng Y."/>
            <person name="Shibata Y."/>
            <person name="Shimada H."/>
            <person name="Shimada K."/>
            <person name="Silva D."/>
            <person name="Sinclair B."/>
            <person name="Sperling S."/>
            <person name="Stupka E."/>
            <person name="Sugiura K."/>
            <person name="Sultana R."/>
            <person name="Takenaka Y."/>
            <person name="Taki K."/>
            <person name="Tammoja K."/>
            <person name="Tan S.L."/>
            <person name="Tang S."/>
            <person name="Taylor M.S."/>
            <person name="Tegner J."/>
            <person name="Teichmann S.A."/>
            <person name="Ueda H.R."/>
            <person name="van Nimwegen E."/>
            <person name="Verardo R."/>
            <person name="Wei C.L."/>
            <person name="Yagi K."/>
            <person name="Yamanishi H."/>
            <person name="Zabarovsky E."/>
            <person name="Zhu S."/>
            <person name="Zimmer A."/>
            <person name="Hide W."/>
            <person name="Bult C."/>
            <person name="Grimmond S.M."/>
            <person name="Teasdale R.D."/>
            <person name="Liu E.T."/>
            <person name="Brusic V."/>
            <person name="Quackenbush J."/>
            <person name="Wahlestedt C."/>
            <person name="Mattick J.S."/>
            <person name="Hume D.A."/>
            <person name="Kai C."/>
            <person name="Sasaki D."/>
            <person name="Tomaru Y."/>
            <person name="Fukuda S."/>
            <person name="Kanamori-Katayama M."/>
            <person name="Suzuki M."/>
            <person name="Aoki J."/>
            <person name="Arakawa T."/>
            <person name="Iida J."/>
            <person name="Imamura K."/>
            <person name="Itoh M."/>
            <person name="Kato T."/>
            <person name="Kawaji H."/>
            <person name="Kawagashira N."/>
            <person name="Kawashima T."/>
            <person name="Kojima M."/>
            <person name="Kondo S."/>
            <person name="Konno H."/>
            <person name="Nakano K."/>
            <person name="Ninomiya N."/>
            <person name="Nishio T."/>
            <person name="Okada M."/>
            <person name="Plessy C."/>
            <person name="Shibata K."/>
            <person name="Shiraki T."/>
            <person name="Suzuki S."/>
            <person name="Tagami M."/>
            <person name="Waki K."/>
            <person name="Watahiki A."/>
            <person name="Okamura-Oho Y."/>
            <person name="Suzuki H."/>
            <person name="Kawai J."/>
            <person name="Hayashizaki Y."/>
        </authorList>
    </citation>
    <scope>NUCLEOTIDE SEQUENCE [LARGE SCALE MRNA] (ISOFORMS 1 AND 2)</scope>
    <source>
        <strain>C57BL/6J</strain>
        <tissue>Testis</tissue>
    </source>
</reference>
<reference key="2">
    <citation type="journal article" date="2004" name="Genome Res.">
        <title>The status, quality, and expansion of the NIH full-length cDNA project: the Mammalian Gene Collection (MGC).</title>
        <authorList>
            <consortium name="The MGC Project Team"/>
        </authorList>
    </citation>
    <scope>NUCLEOTIDE SEQUENCE [LARGE SCALE MRNA]</scope>
    <source>
        <tissue>Brain</tissue>
    </source>
</reference>
<reference key="3">
    <citation type="journal article" date="2001" name="J. Biol. Chem.">
        <title>Identification and functional analysis of splice variants of the germ cell soluble adenylyl cyclase.</title>
        <authorList>
            <person name="Jaiswal B.S."/>
            <person name="Conti M."/>
        </authorList>
    </citation>
    <scope>ALTERNATIVE SPLICING</scope>
</reference>
<reference key="4">
    <citation type="journal article" date="2003" name="FASEB J.">
        <title>Compartmentalization of bicarbonate-sensitive adenylyl cyclase in distinct signaling microdomains.</title>
        <authorList>
            <person name="Zippin J.H."/>
            <person name="Chen Y."/>
            <person name="Nahirney P."/>
            <person name="Kamenetsky M."/>
            <person name="Wuttke M.S."/>
            <person name="Fischman D.A."/>
            <person name="Levin L.R."/>
            <person name="Buck J."/>
        </authorList>
    </citation>
    <scope>SUBCELLULAR LOCATION</scope>
</reference>
<reference key="5">
    <citation type="journal article" date="2004" name="Proc. Natl. Acad. Sci. U.S.A.">
        <title>Mice deficient for soluble adenylyl cyclase are infertile because of a severe sperm-motility defect.</title>
        <authorList>
            <person name="Esposito G."/>
            <person name="Jaiswal B.S."/>
            <person name="Xie F."/>
            <person name="Krajnc-Franken M.A.M."/>
            <person name="Robben T.J.A.A."/>
            <person name="Strik A.M."/>
            <person name="Kuil C."/>
            <person name="Philipsen R.L.A."/>
            <person name="van Duin M."/>
            <person name="Conti M."/>
            <person name="Gossen J.A."/>
        </authorList>
    </citation>
    <scope>FUNCTION</scope>
    <scope>DISRUPTION PHENOTYPE</scope>
</reference>
<reference key="6">
    <citation type="journal article" date="2005" name="Dev. Cell">
        <title>The 'soluble' adenylyl cyclase in sperm mediates multiple signaling events required for fertilization.</title>
        <authorList>
            <person name="Hess K.C."/>
            <person name="Jones B.H."/>
            <person name="Marquez B."/>
            <person name="Chen Y."/>
            <person name="Ord T.S."/>
            <person name="Kamenetsky M."/>
            <person name="Miyamoto C."/>
            <person name="Zippin J.H."/>
            <person name="Kopf G.S."/>
            <person name="Suarez S.S."/>
            <person name="Levin L.R."/>
            <person name="Williams C.J."/>
            <person name="Buck J."/>
            <person name="Moss S.B."/>
        </authorList>
    </citation>
    <scope>FUNCTION</scope>
    <scope>TISSUE SPECIFICITY</scope>
</reference>
<organism>
    <name type="scientific">Mus musculus</name>
    <name type="common">Mouse</name>
    <dbReference type="NCBI Taxonomy" id="10090"/>
    <lineage>
        <taxon>Eukaryota</taxon>
        <taxon>Metazoa</taxon>
        <taxon>Chordata</taxon>
        <taxon>Craniata</taxon>
        <taxon>Vertebrata</taxon>
        <taxon>Euteleostomi</taxon>
        <taxon>Mammalia</taxon>
        <taxon>Eutheria</taxon>
        <taxon>Euarchontoglires</taxon>
        <taxon>Glires</taxon>
        <taxon>Rodentia</taxon>
        <taxon>Myomorpha</taxon>
        <taxon>Muroidea</taxon>
        <taxon>Muridae</taxon>
        <taxon>Murinae</taxon>
        <taxon>Mus</taxon>
        <taxon>Mus</taxon>
    </lineage>
</organism>
<feature type="chain" id="PRO_0000317102" description="Adenylate cyclase type 10">
    <location>
        <begin position="1"/>
        <end position="1614"/>
    </location>
</feature>
<feature type="domain" description="Guanylate cyclase 1" evidence="2">
    <location>
        <begin position="42"/>
        <end position="179"/>
    </location>
</feature>
<feature type="domain" description="Guanylate cyclase 2" evidence="2">
    <location>
        <begin position="293"/>
        <end position="418"/>
    </location>
</feature>
<feature type="binding site" evidence="1">
    <location>
        <begin position="47"/>
        <end position="52"/>
    </location>
    <ligand>
        <name>ATP</name>
        <dbReference type="ChEBI" id="CHEBI:30616"/>
    </ligand>
</feature>
<feature type="binding site" evidence="2">
    <location>
        <position position="47"/>
    </location>
    <ligand>
        <name>Mg(2+)</name>
        <dbReference type="ChEBI" id="CHEBI:18420"/>
        <label>1</label>
    </ligand>
</feature>
<feature type="binding site" evidence="2">
    <location>
        <position position="47"/>
    </location>
    <ligand>
        <name>Mg(2+)</name>
        <dbReference type="ChEBI" id="CHEBI:18420"/>
        <label>2</label>
    </ligand>
</feature>
<feature type="binding site" evidence="2">
    <location>
        <position position="48"/>
    </location>
    <ligand>
        <name>Mg(2+)</name>
        <dbReference type="ChEBI" id="CHEBI:18420"/>
        <label>2</label>
    </ligand>
</feature>
<feature type="binding site" evidence="1">
    <location>
        <position position="95"/>
    </location>
    <ligand>
        <name>hydrogencarbonate</name>
        <dbReference type="ChEBI" id="CHEBI:17544"/>
    </ligand>
</feature>
<feature type="binding site" evidence="1">
    <location>
        <position position="99"/>
    </location>
    <ligand>
        <name>ATP</name>
        <dbReference type="ChEBI" id="CHEBI:30616"/>
    </ligand>
</feature>
<feature type="binding site" evidence="2">
    <location>
        <position position="99"/>
    </location>
    <ligand>
        <name>Mg(2+)</name>
        <dbReference type="ChEBI" id="CHEBI:18420"/>
        <label>1</label>
    </ligand>
</feature>
<feature type="binding site" evidence="2">
    <location>
        <position position="99"/>
    </location>
    <ligand>
        <name>Mg(2+)</name>
        <dbReference type="ChEBI" id="CHEBI:18420"/>
        <label>2</label>
    </ligand>
</feature>
<feature type="binding site" evidence="1">
    <location>
        <position position="144"/>
    </location>
    <ligand>
        <name>ATP</name>
        <dbReference type="ChEBI" id="CHEBI:30616"/>
    </ligand>
</feature>
<feature type="binding site" evidence="1">
    <location>
        <position position="167"/>
    </location>
    <ligand>
        <name>hydrogencarbonate</name>
        <dbReference type="ChEBI" id="CHEBI:17544"/>
    </ligand>
</feature>
<feature type="binding site" evidence="1">
    <location>
        <position position="176"/>
    </location>
    <ligand>
        <name>hydrogencarbonate</name>
        <dbReference type="ChEBI" id="CHEBI:17544"/>
    </ligand>
</feature>
<feature type="binding site" evidence="1">
    <location>
        <position position="337"/>
    </location>
    <ligand>
        <name>hydrogencarbonate</name>
        <dbReference type="ChEBI" id="CHEBI:17544"/>
    </ligand>
</feature>
<feature type="binding site" evidence="1">
    <location>
        <position position="406"/>
    </location>
    <ligand>
        <name>ATP</name>
        <dbReference type="ChEBI" id="CHEBI:30616"/>
    </ligand>
</feature>
<feature type="binding site" evidence="1">
    <location>
        <begin position="412"/>
        <end position="416"/>
    </location>
    <ligand>
        <name>ATP</name>
        <dbReference type="ChEBI" id="CHEBI:30616"/>
    </ligand>
</feature>
<feature type="splice variant" id="VSP_030871" description="In isoform 2." evidence="6">
    <original>MF</original>
    <variation>TC</variation>
    <location>
        <begin position="470"/>
        <end position="471"/>
    </location>
</feature>
<feature type="splice variant" id="VSP_030872" description="In isoform 2." evidence="6">
    <location>
        <begin position="472"/>
        <end position="1614"/>
    </location>
</feature>
<feature type="sequence conflict" description="In Ref. 1; BAC26642." evidence="7" ref="1">
    <original>Q</original>
    <variation>H</variation>
    <location>
        <position position="304"/>
    </location>
</feature>
<feature type="sequence conflict" description="In Ref. 1; BAC26642." evidence="7" ref="1">
    <original>I</original>
    <variation>V</variation>
    <location>
        <position position="1009"/>
    </location>
</feature>
<evidence type="ECO:0000250" key="1">
    <source>
        <dbReference type="UniProtKB" id="Q96PN6"/>
    </source>
</evidence>
<evidence type="ECO:0000255" key="2">
    <source>
        <dbReference type="PROSITE-ProRule" id="PRU00099"/>
    </source>
</evidence>
<evidence type="ECO:0000269" key="3">
    <source>
    </source>
</evidence>
<evidence type="ECO:0000269" key="4">
    <source>
    </source>
</evidence>
<evidence type="ECO:0000269" key="5">
    <source>
    </source>
</evidence>
<evidence type="ECO:0000303" key="6">
    <source>
    </source>
</evidence>
<evidence type="ECO:0000305" key="7"/>
<comment type="function">
    <text evidence="1 4 5">Catalyzes the formation of the signaling molecule cAMP. May function as sensor that mediates responses to changes in cellular bicarbonate and CO(2) levels (By similarity). Has a critical role in mammalian spermatogenesis by producing the cAMP which regulates cAMP-responsive nuclear factors indispensable for sperm maturation in the epididymis. Induces capacitation, the maturational process that sperm undergo prior to fertilization (PubMed:14976244, PubMed:16054031). Involved in ciliary beat regulation (By similarity).</text>
</comment>
<comment type="catalytic activity">
    <reaction evidence="1">
        <text>ATP = 3',5'-cyclic AMP + diphosphate</text>
        <dbReference type="Rhea" id="RHEA:15389"/>
        <dbReference type="ChEBI" id="CHEBI:30616"/>
        <dbReference type="ChEBI" id="CHEBI:33019"/>
        <dbReference type="ChEBI" id="CHEBI:58165"/>
        <dbReference type="EC" id="4.6.1.1"/>
    </reaction>
</comment>
<comment type="cofactor">
    <cofactor evidence="1">
        <name>Mg(2+)</name>
        <dbReference type="ChEBI" id="CHEBI:18420"/>
    </cofactor>
    <cofactor evidence="1">
        <name>Mn(2+)</name>
        <dbReference type="ChEBI" id="CHEBI:29035"/>
    </cofactor>
    <text evidence="1">Binds 2 magnesium ions per subunit. Is also active with manganese (in vitro).</text>
</comment>
<comment type="activity regulation">
    <text evidence="1">Activated by manganese or magnesium ions. In the presence of magnesium ions, the enzyme is activated by bicarbonate. Calcium mildly increases the enzyme activity, also in the presence of magnesium ions.</text>
</comment>
<comment type="interaction">
    <interactant intactId="EBI-15639026">
        <id>Q8C0T9</id>
    </interactant>
    <interactant intactId="EBI-15639080">
        <id>Q6UJY2</id>
        <label>Slc9c1</label>
    </interactant>
    <organismsDiffer>false</organismsDiffer>
    <experiments>2</experiments>
</comment>
<comment type="subcellular location">
    <subcellularLocation>
        <location evidence="1">Cell membrane</location>
        <topology evidence="1">Peripheral membrane protein</topology>
        <orientation evidence="1">Cytoplasmic side</orientation>
    </subcellularLocation>
    <subcellularLocation>
        <location evidence="3">Cytoplasm</location>
        <location evidence="3">Cytoskeleton</location>
    </subcellularLocation>
    <subcellularLocation>
        <location evidence="3">Cytoplasm</location>
        <location evidence="3">Perinuclear region</location>
    </subcellularLocation>
    <subcellularLocation>
        <location evidence="3">Nucleus</location>
    </subcellularLocation>
    <subcellularLocation>
        <location evidence="1">Cell projection</location>
        <location evidence="1">Cilium</location>
    </subcellularLocation>
    <subcellularLocation>
        <location evidence="3">Cytoplasm</location>
    </subcellularLocation>
    <subcellularLocation>
        <location evidence="3">Mitochondrion</location>
    </subcellularLocation>
    <text evidence="1 3">Distributed to subcellular compartments containing cAMP targets. Found as a plasma membrane-associated protein, protein concentrated in the perinuclear region and protein colocalized with actin or tubulin.</text>
</comment>
<comment type="alternative products">
    <event type="alternative splicing"/>
    <isoform>
        <id>Q8C0T9-1</id>
        <name>1</name>
        <sequence type="displayed"/>
    </isoform>
    <isoform>
        <id>Q8C0T9-2</id>
        <name>2</name>
        <sequence type="described" ref="VSP_030871 VSP_030872"/>
    </isoform>
</comment>
<comment type="tissue specificity">
    <text evidence="5">Expressed in testis.</text>
</comment>
<comment type="domain">
    <text evidence="1">The N-terminal guanylate cyclase domains are required for enzyme activity. Fragments containing the first 470 amino acid residues are fully active.</text>
</comment>
<comment type="disruption phenotype">
    <text evidence="4">Mice are infertile because of a severe sperm-motility defect.</text>
</comment>
<comment type="similarity">
    <text evidence="2">Belongs to the adenylyl cyclase class-4/guanylyl cyclase family.</text>
</comment>